<keyword id="KW-0012">Acyltransferase</keyword>
<keyword id="KW-0028">Amino-acid biosynthesis</keyword>
<keyword id="KW-0963">Cytoplasm</keyword>
<keyword id="KW-0220">Diaminopimelate biosynthesis</keyword>
<keyword id="KW-0457">Lysine biosynthesis</keyword>
<keyword id="KW-0677">Repeat</keyword>
<keyword id="KW-0808">Transferase</keyword>
<reference key="1">
    <citation type="submission" date="2008-02" db="EMBL/GenBank/DDBJ databases">
        <title>Complete sequence of Escherichia coli C str. ATCC 8739.</title>
        <authorList>
            <person name="Copeland A."/>
            <person name="Lucas S."/>
            <person name="Lapidus A."/>
            <person name="Glavina del Rio T."/>
            <person name="Dalin E."/>
            <person name="Tice H."/>
            <person name="Bruce D."/>
            <person name="Goodwin L."/>
            <person name="Pitluck S."/>
            <person name="Kiss H."/>
            <person name="Brettin T."/>
            <person name="Detter J.C."/>
            <person name="Han C."/>
            <person name="Kuske C.R."/>
            <person name="Schmutz J."/>
            <person name="Larimer F."/>
            <person name="Land M."/>
            <person name="Hauser L."/>
            <person name="Kyrpides N."/>
            <person name="Mikhailova N."/>
            <person name="Ingram L."/>
            <person name="Richardson P."/>
        </authorList>
    </citation>
    <scope>NUCLEOTIDE SEQUENCE [LARGE SCALE GENOMIC DNA]</scope>
    <source>
        <strain>ATCC 8739 / DSM 1576 / NBRC 3972 / NCIMB 8545 / WDCM 00012 / Crooks</strain>
    </source>
</reference>
<protein>
    <recommendedName>
        <fullName evidence="1">2,3,4,5-tetrahydropyridine-2,6-dicarboxylate N-succinyltransferase</fullName>
        <ecNumber evidence="1">2.3.1.117</ecNumber>
    </recommendedName>
    <alternativeName>
        <fullName evidence="1">Tetrahydrodipicolinate N-succinyltransferase</fullName>
        <shortName evidence="1">THDP succinyltransferase</shortName>
        <shortName evidence="1">THP succinyltransferase</shortName>
        <shortName evidence="1">Tetrahydropicolinate succinylase</shortName>
    </alternativeName>
</protein>
<name>DAPD_ECOLC</name>
<accession>B1IQH5</accession>
<proteinExistence type="inferred from homology"/>
<evidence type="ECO:0000255" key="1">
    <source>
        <dbReference type="HAMAP-Rule" id="MF_00811"/>
    </source>
</evidence>
<feature type="chain" id="PRO_1000083751" description="2,3,4,5-tetrahydropyridine-2,6-dicarboxylate N-succinyltransferase">
    <location>
        <begin position="1"/>
        <end position="274"/>
    </location>
</feature>
<feature type="binding site" evidence="1">
    <location>
        <position position="104"/>
    </location>
    <ligand>
        <name>substrate</name>
    </ligand>
</feature>
<feature type="binding site" evidence="1">
    <location>
        <position position="141"/>
    </location>
    <ligand>
        <name>substrate</name>
    </ligand>
</feature>
<gene>
    <name evidence="1" type="primary">dapD</name>
    <name type="ordered locus">EcolC_3494</name>
</gene>
<organism>
    <name type="scientific">Escherichia coli (strain ATCC 8739 / DSM 1576 / NBRC 3972 / NCIMB 8545 / WDCM 00012 / Crooks)</name>
    <dbReference type="NCBI Taxonomy" id="481805"/>
    <lineage>
        <taxon>Bacteria</taxon>
        <taxon>Pseudomonadati</taxon>
        <taxon>Pseudomonadota</taxon>
        <taxon>Gammaproteobacteria</taxon>
        <taxon>Enterobacterales</taxon>
        <taxon>Enterobacteriaceae</taxon>
        <taxon>Escherichia</taxon>
    </lineage>
</organism>
<comment type="catalytic activity">
    <reaction evidence="1">
        <text>(S)-2,3,4,5-tetrahydrodipicolinate + succinyl-CoA + H2O = (S)-2-succinylamino-6-oxoheptanedioate + CoA</text>
        <dbReference type="Rhea" id="RHEA:17325"/>
        <dbReference type="ChEBI" id="CHEBI:15377"/>
        <dbReference type="ChEBI" id="CHEBI:15685"/>
        <dbReference type="ChEBI" id="CHEBI:16845"/>
        <dbReference type="ChEBI" id="CHEBI:57287"/>
        <dbReference type="ChEBI" id="CHEBI:57292"/>
        <dbReference type="EC" id="2.3.1.117"/>
    </reaction>
</comment>
<comment type="pathway">
    <text evidence="1">Amino-acid biosynthesis; L-lysine biosynthesis via DAP pathway; LL-2,6-diaminopimelate from (S)-tetrahydrodipicolinate (succinylase route): step 1/3.</text>
</comment>
<comment type="subunit">
    <text evidence="1">Homotrimer.</text>
</comment>
<comment type="subcellular location">
    <subcellularLocation>
        <location evidence="1">Cytoplasm</location>
    </subcellularLocation>
</comment>
<comment type="similarity">
    <text evidence="1">Belongs to the transferase hexapeptide repeat family.</text>
</comment>
<sequence>MQQLQNIIETAFERRAEITPANADTVTREAVNQVIALLDSGALRVAEKIDGQWVTHQWLKKAVLLSFRINDNQVIEGAESRYFDKVPMKFADYDEARFQKEGFRVVPPAAVRQGAFIARNTVLMPSYVNIGAYVDEGTMVDTWATVGSCAQIGKNVHLSGGVGIGGVLEPLQANPTIIEDNCFIGARSEVVEGVIVEEGSVISMGVYIGQSTRIYDRETGEIHYGRVPAGSVVVSGNLPSKDGKYSLYCAVIVKKVDAKTRGKVGINELLRTID</sequence>
<dbReference type="EC" id="2.3.1.117" evidence="1"/>
<dbReference type="EMBL" id="CP000946">
    <property type="protein sequence ID" value="ACA79108.1"/>
    <property type="molecule type" value="Genomic_DNA"/>
</dbReference>
<dbReference type="RefSeq" id="WP_001186650.1">
    <property type="nucleotide sequence ID" value="NZ_MTFT01000035.1"/>
</dbReference>
<dbReference type="SMR" id="B1IQH5"/>
<dbReference type="GeneID" id="93777259"/>
<dbReference type="KEGG" id="ecl:EcolC_3494"/>
<dbReference type="HOGENOM" id="CLU_050859_0_1_6"/>
<dbReference type="UniPathway" id="UPA00034">
    <property type="reaction ID" value="UER00019"/>
</dbReference>
<dbReference type="GO" id="GO:0005737">
    <property type="term" value="C:cytoplasm"/>
    <property type="evidence" value="ECO:0007669"/>
    <property type="project" value="UniProtKB-SubCell"/>
</dbReference>
<dbReference type="GO" id="GO:0008666">
    <property type="term" value="F:2,3,4,5-tetrahydropyridine-2,6-dicarboxylate N-succinyltransferase activity"/>
    <property type="evidence" value="ECO:0007669"/>
    <property type="project" value="UniProtKB-UniRule"/>
</dbReference>
<dbReference type="GO" id="GO:0016779">
    <property type="term" value="F:nucleotidyltransferase activity"/>
    <property type="evidence" value="ECO:0007669"/>
    <property type="project" value="TreeGrafter"/>
</dbReference>
<dbReference type="GO" id="GO:0019877">
    <property type="term" value="P:diaminopimelate biosynthetic process"/>
    <property type="evidence" value="ECO:0007669"/>
    <property type="project" value="UniProtKB-UniRule"/>
</dbReference>
<dbReference type="GO" id="GO:0009089">
    <property type="term" value="P:lysine biosynthetic process via diaminopimelate"/>
    <property type="evidence" value="ECO:0007669"/>
    <property type="project" value="UniProtKB-UniRule"/>
</dbReference>
<dbReference type="CDD" id="cd03350">
    <property type="entry name" value="LbH_THP_succinylT"/>
    <property type="match status" value="1"/>
</dbReference>
<dbReference type="FunFam" id="1.10.166.10:FF:000001">
    <property type="entry name" value="2,3,4,5-tetrahydropyridine-2,6-dicarboxylate N-succinyltransferase"/>
    <property type="match status" value="1"/>
</dbReference>
<dbReference type="FunFam" id="2.160.10.10:FF:000004">
    <property type="entry name" value="2,3,4,5-tetrahydropyridine-2,6-dicarboxylate N-succinyltransferase"/>
    <property type="match status" value="1"/>
</dbReference>
<dbReference type="Gene3D" id="2.160.10.10">
    <property type="entry name" value="Hexapeptide repeat proteins"/>
    <property type="match status" value="1"/>
</dbReference>
<dbReference type="Gene3D" id="1.10.166.10">
    <property type="entry name" value="Tetrahydrodipicolinate-N-succinyltransferase, N-terminal domain"/>
    <property type="match status" value="1"/>
</dbReference>
<dbReference type="HAMAP" id="MF_00811">
    <property type="entry name" value="DapD"/>
    <property type="match status" value="1"/>
</dbReference>
<dbReference type="InterPro" id="IPR005664">
    <property type="entry name" value="DapD_Trfase_Hexpep_rpt_fam"/>
</dbReference>
<dbReference type="InterPro" id="IPR001451">
    <property type="entry name" value="Hexapep"/>
</dbReference>
<dbReference type="InterPro" id="IPR018357">
    <property type="entry name" value="Hexapep_transf_CS"/>
</dbReference>
<dbReference type="InterPro" id="IPR023180">
    <property type="entry name" value="THP_succinylTrfase_dom1"/>
</dbReference>
<dbReference type="InterPro" id="IPR037133">
    <property type="entry name" value="THP_succinylTrfase_N_sf"/>
</dbReference>
<dbReference type="InterPro" id="IPR011004">
    <property type="entry name" value="Trimer_LpxA-like_sf"/>
</dbReference>
<dbReference type="NCBIfam" id="TIGR00965">
    <property type="entry name" value="dapD"/>
    <property type="match status" value="1"/>
</dbReference>
<dbReference type="NCBIfam" id="NF008808">
    <property type="entry name" value="PRK11830.1"/>
    <property type="match status" value="1"/>
</dbReference>
<dbReference type="PANTHER" id="PTHR19136:SF52">
    <property type="entry name" value="2,3,4,5-TETRAHYDROPYRIDINE-2,6-DICARBOXYLATE N-SUCCINYLTRANSFERASE"/>
    <property type="match status" value="1"/>
</dbReference>
<dbReference type="PANTHER" id="PTHR19136">
    <property type="entry name" value="MOLYBDENUM COFACTOR GUANYLYLTRANSFERASE"/>
    <property type="match status" value="1"/>
</dbReference>
<dbReference type="Pfam" id="PF14602">
    <property type="entry name" value="Hexapep_2"/>
    <property type="match status" value="1"/>
</dbReference>
<dbReference type="Pfam" id="PF14805">
    <property type="entry name" value="THDPS_N_2"/>
    <property type="match status" value="1"/>
</dbReference>
<dbReference type="SUPFAM" id="SSF51161">
    <property type="entry name" value="Trimeric LpxA-like enzymes"/>
    <property type="match status" value="1"/>
</dbReference>
<dbReference type="PROSITE" id="PS00101">
    <property type="entry name" value="HEXAPEP_TRANSFERASES"/>
    <property type="match status" value="1"/>
</dbReference>